<protein>
    <recommendedName>
        <fullName evidence="4">Adenoregulin-related peptide</fullName>
    </recommendedName>
    <alternativeName>
        <fullName evidence="4">ARP-AC1</fullName>
    </alternativeName>
</protein>
<feature type="signal peptide" evidence="1">
    <location>
        <begin position="1"/>
        <end position="22"/>
    </location>
</feature>
<feature type="propeptide" id="PRO_0000442276" evidence="6">
    <location>
        <begin position="23"/>
        <end position="43"/>
    </location>
</feature>
<feature type="peptide" id="PRO_0000442277" description="Adenoregulin-related peptide" evidence="3">
    <location>
        <begin position="46"/>
        <end position="78"/>
    </location>
</feature>
<feature type="propeptide" id="PRO_0000442278" evidence="6">
    <location>
        <begin position="79"/>
        <end position="81"/>
    </location>
</feature>
<feature type="region of interest" description="Disordered" evidence="2">
    <location>
        <begin position="24"/>
        <end position="46"/>
    </location>
</feature>
<feature type="compositionally biased region" description="Acidic residues" evidence="2">
    <location>
        <begin position="30"/>
        <end position="40"/>
    </location>
</feature>
<feature type="modified residue" description="Isoleucine amide" evidence="3">
    <location>
        <position position="78"/>
    </location>
</feature>
<reference key="1">
    <citation type="journal article" date="2008" name="Biochimie">
        <title>Novel dermaseptin, adenoregulin and caerin homologs from the Central American red-eyed leaf frog, Agalychnis callidryas, revealed by functional peptidomics of defensive skin secretion.</title>
        <authorList>
            <person name="Wang L."/>
            <person name="Zhou M."/>
            <person name="McClelland A."/>
            <person name="Reilly A."/>
            <person name="Chen T."/>
            <person name="Gagliardo R."/>
            <person name="Walker B."/>
            <person name="Shaw C."/>
        </authorList>
    </citation>
    <scope>NUCLEOTIDE SEQUENCE [MRNA]</scope>
    <scope>PROTEIN SEQUENCE OF 46-78</scope>
    <scope>FUNCTION</scope>
    <scope>SUBCELLULAR LOCATION</scope>
    <scope>AMIDATION AT ILE-78</scope>
    <scope>MASS SPECTROMETRY</scope>
    <source>
        <tissue>Skin secretion</tissue>
    </source>
</reference>
<evidence type="ECO:0000255" key="1"/>
<evidence type="ECO:0000256" key="2">
    <source>
        <dbReference type="SAM" id="MobiDB-lite"/>
    </source>
</evidence>
<evidence type="ECO:0000269" key="3">
    <source>
    </source>
</evidence>
<evidence type="ECO:0000303" key="4">
    <source>
    </source>
</evidence>
<evidence type="ECO:0000305" key="5"/>
<evidence type="ECO:0000305" key="6">
    <source>
    </source>
</evidence>
<accession>B6HY15</accession>
<comment type="function">
    <text evidence="3">Has antibacterial activity against Gram-positive bacterium M.luteus NCT C2665 and against Gram-negative bacterium E.coli K12D31.</text>
</comment>
<comment type="subcellular location">
    <subcellularLocation>
        <location evidence="3">Secreted</location>
    </subcellularLocation>
</comment>
<comment type="tissue specificity">
    <text evidence="6">Expressed by the skin glands.</text>
</comment>
<comment type="mass spectrometry"/>
<comment type="similarity">
    <text evidence="5">Belongs to the frog skin active peptide (FSAP) family. Dermaseptin subfamily.</text>
</comment>
<keyword id="KW-0027">Amidation</keyword>
<keyword id="KW-0878">Amphibian defense peptide</keyword>
<keyword id="KW-0044">Antibiotic</keyword>
<keyword id="KW-0929">Antimicrobial</keyword>
<keyword id="KW-0165">Cleavage on pair of basic residues</keyword>
<keyword id="KW-0903">Direct protein sequencing</keyword>
<keyword id="KW-0964">Secreted</keyword>
<keyword id="KW-0732">Signal</keyword>
<sequence>MAFLKKSLLLVLFLGLVSLSICEEEKRENEDEEEQEDDEQSEMKRGMWSKIKEAGKAAAKAAAKAAGKAALDVVSGAIGEQ</sequence>
<name>DRSA_AGACL</name>
<dbReference type="EMBL" id="AM944841">
    <property type="protein sequence ID" value="CAQ16441.1"/>
    <property type="molecule type" value="mRNA"/>
</dbReference>
<dbReference type="SMR" id="B6HY15"/>
<dbReference type="GO" id="GO:0005576">
    <property type="term" value="C:extracellular region"/>
    <property type="evidence" value="ECO:0007669"/>
    <property type="project" value="UniProtKB-SubCell"/>
</dbReference>
<dbReference type="GO" id="GO:0042742">
    <property type="term" value="P:defense response to bacterium"/>
    <property type="evidence" value="ECO:0007669"/>
    <property type="project" value="UniProtKB-KW"/>
</dbReference>
<dbReference type="InterPro" id="IPR004275">
    <property type="entry name" value="Frog_antimicrobial_propeptide"/>
</dbReference>
<dbReference type="Pfam" id="PF03032">
    <property type="entry name" value="FSAP_sig_propep"/>
    <property type="match status" value="1"/>
</dbReference>
<organism>
    <name type="scientific">Agalychnis callidryas</name>
    <name type="common">Red-eyed tree frog</name>
    <name type="synonym">Phyllomedusa callidryas</name>
    <dbReference type="NCBI Taxonomy" id="197464"/>
    <lineage>
        <taxon>Eukaryota</taxon>
        <taxon>Metazoa</taxon>
        <taxon>Chordata</taxon>
        <taxon>Craniata</taxon>
        <taxon>Vertebrata</taxon>
        <taxon>Euteleostomi</taxon>
        <taxon>Amphibia</taxon>
        <taxon>Batrachia</taxon>
        <taxon>Anura</taxon>
        <taxon>Neobatrachia</taxon>
        <taxon>Hyloidea</taxon>
        <taxon>Hylidae</taxon>
        <taxon>Phyllomedusinae</taxon>
        <taxon>Agalychnis</taxon>
    </lineage>
</organism>
<proteinExistence type="evidence at protein level"/>